<protein>
    <recommendedName>
        <fullName evidence="4 5">Beta-mammal toxin Cv1</fullName>
    </recommendedName>
</protein>
<proteinExistence type="evidence at protein level"/>
<evidence type="ECO:0000250" key="1">
    <source>
        <dbReference type="UniProtKB" id="C0HLR3"/>
    </source>
</evidence>
<evidence type="ECO:0000255" key="2">
    <source>
        <dbReference type="PROSITE-ProRule" id="PRU01210"/>
    </source>
</evidence>
<evidence type="ECO:0000269" key="3">
    <source>
    </source>
</evidence>
<evidence type="ECO:0000303" key="4">
    <source>
    </source>
</evidence>
<evidence type="ECO:0000305" key="5"/>
<evidence type="ECO:0000305" key="6">
    <source>
    </source>
</evidence>
<feature type="chain" id="PRO_0000461633" description="Beta-mammal toxin Cv1" evidence="3">
    <location>
        <begin position="1"/>
        <end position="66"/>
    </location>
</feature>
<feature type="domain" description="LCN-type CS-alpha/beta" evidence="2">
    <location>
        <begin position="1"/>
        <end position="66"/>
    </location>
</feature>
<feature type="disulfide bond" evidence="2">
    <location>
        <begin position="12"/>
        <end position="65"/>
    </location>
</feature>
<feature type="disulfide bond" evidence="2">
    <location>
        <begin position="16"/>
        <end position="41"/>
    </location>
</feature>
<feature type="disulfide bond" evidence="2">
    <location>
        <begin position="25"/>
        <end position="46"/>
    </location>
</feature>
<feature type="disulfide bond" evidence="2">
    <location>
        <begin position="29"/>
        <end position="48"/>
    </location>
</feature>
<accession>C0HMB8</accession>
<reference key="1">
    <citation type="journal article" date="2024" name="Toxins">
        <title>Toxic peptides from the Mexican scorpion Centruroides villegasi: chemical structure and evaluation of recognition by human single-chain antibodies.</title>
        <authorList>
            <person name="Riano-Umbarila L."/>
            <person name="Olamendi-Portugal T."/>
            <person name="Romero-Moreno J.A."/>
            <person name="Delgado-Prudencio G."/>
            <person name="Zamudio F.Z."/>
            <person name="Becerril B."/>
            <person name="Possani L.D."/>
        </authorList>
    </citation>
    <scope>PROTEIN SEQUENCE</scope>
    <scope>SUBCELLULAR LOCATION</scope>
    <scope>FUNCTION</scope>
    <scope>BIOASSAY</scope>
    <scope>MASS SPECTROMETRY</scope>
    <scope>ACTIVITY REGULATION</scope>
    <source>
        <tissue>Venom</tissue>
    </source>
</reference>
<dbReference type="GO" id="GO:0005576">
    <property type="term" value="C:extracellular region"/>
    <property type="evidence" value="ECO:0007669"/>
    <property type="project" value="UniProtKB-SubCell"/>
</dbReference>
<dbReference type="GO" id="GO:0019871">
    <property type="term" value="F:sodium channel inhibitor activity"/>
    <property type="evidence" value="ECO:0007669"/>
    <property type="project" value="InterPro"/>
</dbReference>
<dbReference type="GO" id="GO:0090729">
    <property type="term" value="F:toxin activity"/>
    <property type="evidence" value="ECO:0007669"/>
    <property type="project" value="UniProtKB-KW"/>
</dbReference>
<dbReference type="GO" id="GO:0006952">
    <property type="term" value="P:defense response"/>
    <property type="evidence" value="ECO:0007669"/>
    <property type="project" value="InterPro"/>
</dbReference>
<dbReference type="CDD" id="cd23106">
    <property type="entry name" value="neurotoxins_LC_scorpion"/>
    <property type="match status" value="1"/>
</dbReference>
<dbReference type="FunFam" id="3.30.30.10:FF:000002">
    <property type="entry name" value="Alpha-like toxin BmK-M1"/>
    <property type="match status" value="1"/>
</dbReference>
<dbReference type="Gene3D" id="3.30.30.10">
    <property type="entry name" value="Knottin, scorpion toxin-like"/>
    <property type="match status" value="1"/>
</dbReference>
<dbReference type="InterPro" id="IPR044062">
    <property type="entry name" value="LCN-type_CS_alpha_beta_dom"/>
</dbReference>
<dbReference type="InterPro" id="IPR003614">
    <property type="entry name" value="Scorpion_toxin-like"/>
</dbReference>
<dbReference type="InterPro" id="IPR036574">
    <property type="entry name" value="Scorpion_toxin-like_sf"/>
</dbReference>
<dbReference type="InterPro" id="IPR018218">
    <property type="entry name" value="Scorpion_toxinL"/>
</dbReference>
<dbReference type="PRINTS" id="PR00285">
    <property type="entry name" value="SCORPNTOXIN"/>
</dbReference>
<dbReference type="SMART" id="SM00505">
    <property type="entry name" value="Knot1"/>
    <property type="match status" value="1"/>
</dbReference>
<dbReference type="SUPFAM" id="SSF57095">
    <property type="entry name" value="Scorpion toxin-like"/>
    <property type="match status" value="1"/>
</dbReference>
<dbReference type="PROSITE" id="PS51863">
    <property type="entry name" value="LCN_CSAB"/>
    <property type="match status" value="1"/>
</dbReference>
<comment type="function">
    <text evidence="1 3">Beta toxins bind voltage-independently at site-4 of sodium channels (Nav) and reduces peak current and shifts the voltage of activation toward more negative potentials thereby affecting sodium channel activation and promoting spontaneous and repetitive firing (By similarity). This toxin is slightly toxic to mice (PubMed:39057941).</text>
</comment>
<comment type="activity regulation">
    <text evidence="3">Is susceptible to be neutralized by human antibodies scFvs 10FG2 and HV.</text>
</comment>
<comment type="subcellular location">
    <subcellularLocation>
        <location evidence="3">Secreted</location>
    </subcellularLocation>
</comment>
<comment type="tissue specificity">
    <text evidence="6">Expressed by the venom gland.</text>
</comment>
<comment type="domain">
    <text evidence="5">Has the structural arrangement of an alpha-helix connected to antiparallel beta-sheets by disulfide bonds (CS-alpha/beta).</text>
</comment>
<comment type="mass spectrometry"/>
<comment type="similarity">
    <text evidence="5">Belongs to the long (4 C-C) scorpion toxin superfamily. Sodium channel inhibitor family. Beta subfamily.</text>
</comment>
<sequence>KEGYIVNLSTGCKYECYKLGDNDYCLKECKLQYGKGAGGYCYAFGCWCTHLYEQAVVWPLPKKTCN</sequence>
<name>SCX1_CENVL</name>
<keyword id="KW-0903">Direct protein sequencing</keyword>
<keyword id="KW-1015">Disulfide bond</keyword>
<keyword id="KW-0872">Ion channel impairing toxin</keyword>
<keyword id="KW-0528">Neurotoxin</keyword>
<keyword id="KW-0964">Secreted</keyword>
<keyword id="KW-0800">Toxin</keyword>
<keyword id="KW-0738">Voltage-gated sodium channel impairing toxin</keyword>
<organism>
    <name type="scientific">Centruroides villegasi</name>
    <name type="common">Scorpion</name>
    <dbReference type="NCBI Taxonomy" id="3161195"/>
    <lineage>
        <taxon>Eukaryota</taxon>
        <taxon>Metazoa</taxon>
        <taxon>Ecdysozoa</taxon>
        <taxon>Arthropoda</taxon>
        <taxon>Chelicerata</taxon>
        <taxon>Arachnida</taxon>
        <taxon>Scorpiones</taxon>
        <taxon>Buthida</taxon>
        <taxon>Buthoidea</taxon>
        <taxon>Buthidae</taxon>
        <taxon>Centruroides</taxon>
    </lineage>
</organism>